<dbReference type="EMBL" id="BA000035">
    <property type="protein sequence ID" value="BAC17383.1"/>
    <property type="molecule type" value="Genomic_DNA"/>
</dbReference>
<dbReference type="RefSeq" id="WP_006769752.1">
    <property type="nucleotide sequence ID" value="NC_004369.1"/>
</dbReference>
<dbReference type="SMR" id="Q8FS32"/>
<dbReference type="STRING" id="196164.gene:10740975"/>
<dbReference type="KEGG" id="cef:CE0573"/>
<dbReference type="eggNOG" id="COG0203">
    <property type="taxonomic scope" value="Bacteria"/>
</dbReference>
<dbReference type="HOGENOM" id="CLU_074407_0_0_11"/>
<dbReference type="OrthoDB" id="9809073at2"/>
<dbReference type="Proteomes" id="UP000001409">
    <property type="component" value="Chromosome"/>
</dbReference>
<dbReference type="GO" id="GO:0022625">
    <property type="term" value="C:cytosolic large ribosomal subunit"/>
    <property type="evidence" value="ECO:0007669"/>
    <property type="project" value="TreeGrafter"/>
</dbReference>
<dbReference type="GO" id="GO:0003735">
    <property type="term" value="F:structural constituent of ribosome"/>
    <property type="evidence" value="ECO:0007669"/>
    <property type="project" value="InterPro"/>
</dbReference>
<dbReference type="GO" id="GO:0006412">
    <property type="term" value="P:translation"/>
    <property type="evidence" value="ECO:0007669"/>
    <property type="project" value="UniProtKB-UniRule"/>
</dbReference>
<dbReference type="FunFam" id="3.90.1030.10:FF:000001">
    <property type="entry name" value="50S ribosomal protein L17"/>
    <property type="match status" value="1"/>
</dbReference>
<dbReference type="Gene3D" id="3.90.1030.10">
    <property type="entry name" value="Ribosomal protein L17"/>
    <property type="match status" value="1"/>
</dbReference>
<dbReference type="HAMAP" id="MF_01368">
    <property type="entry name" value="Ribosomal_bL17"/>
    <property type="match status" value="1"/>
</dbReference>
<dbReference type="InterPro" id="IPR000456">
    <property type="entry name" value="Ribosomal_bL17"/>
</dbReference>
<dbReference type="InterPro" id="IPR047859">
    <property type="entry name" value="Ribosomal_bL17_CS"/>
</dbReference>
<dbReference type="InterPro" id="IPR036373">
    <property type="entry name" value="Ribosomal_bL17_sf"/>
</dbReference>
<dbReference type="NCBIfam" id="TIGR00059">
    <property type="entry name" value="L17"/>
    <property type="match status" value="1"/>
</dbReference>
<dbReference type="PANTHER" id="PTHR14413:SF16">
    <property type="entry name" value="LARGE RIBOSOMAL SUBUNIT PROTEIN BL17M"/>
    <property type="match status" value="1"/>
</dbReference>
<dbReference type="PANTHER" id="PTHR14413">
    <property type="entry name" value="RIBOSOMAL PROTEIN L17"/>
    <property type="match status" value="1"/>
</dbReference>
<dbReference type="Pfam" id="PF01196">
    <property type="entry name" value="Ribosomal_L17"/>
    <property type="match status" value="1"/>
</dbReference>
<dbReference type="SUPFAM" id="SSF64263">
    <property type="entry name" value="Prokaryotic ribosomal protein L17"/>
    <property type="match status" value="1"/>
</dbReference>
<dbReference type="PROSITE" id="PS01167">
    <property type="entry name" value="RIBOSOMAL_L17"/>
    <property type="match status" value="1"/>
</dbReference>
<reference key="1">
    <citation type="journal article" date="2003" name="Genome Res.">
        <title>Comparative complete genome sequence analysis of the amino acid replacements responsible for the thermostability of Corynebacterium efficiens.</title>
        <authorList>
            <person name="Nishio Y."/>
            <person name="Nakamura Y."/>
            <person name="Kawarabayasi Y."/>
            <person name="Usuda Y."/>
            <person name="Kimura E."/>
            <person name="Sugimoto S."/>
            <person name="Matsui K."/>
            <person name="Yamagishi A."/>
            <person name="Kikuchi H."/>
            <person name="Ikeo K."/>
            <person name="Gojobori T."/>
        </authorList>
    </citation>
    <scope>NUCLEOTIDE SEQUENCE [LARGE SCALE GENOMIC DNA]</scope>
    <source>
        <strain>DSM 44549 / YS-314 / AJ 12310 / JCM 11189 / NBRC 100395</strain>
    </source>
</reference>
<accession>Q8FS32</accession>
<protein>
    <recommendedName>
        <fullName evidence="1">Large ribosomal subunit protein bL17</fullName>
    </recommendedName>
    <alternativeName>
        <fullName evidence="3">50S ribosomal protein L17</fullName>
    </alternativeName>
</protein>
<proteinExistence type="inferred from homology"/>
<organism>
    <name type="scientific">Corynebacterium efficiens (strain DSM 44549 / YS-314 / AJ 12310 / JCM 11189 / NBRC 100395)</name>
    <dbReference type="NCBI Taxonomy" id="196164"/>
    <lineage>
        <taxon>Bacteria</taxon>
        <taxon>Bacillati</taxon>
        <taxon>Actinomycetota</taxon>
        <taxon>Actinomycetes</taxon>
        <taxon>Mycobacteriales</taxon>
        <taxon>Corynebacteriaceae</taxon>
        <taxon>Corynebacterium</taxon>
    </lineage>
</organism>
<name>RL17_COREF</name>
<keyword id="KW-1185">Reference proteome</keyword>
<keyword id="KW-0687">Ribonucleoprotein</keyword>
<keyword id="KW-0689">Ribosomal protein</keyword>
<feature type="chain" id="PRO_1000055809" description="Large ribosomal subunit protein bL17">
    <location>
        <begin position="1"/>
        <end position="184"/>
    </location>
</feature>
<feature type="region of interest" description="Disordered" evidence="2">
    <location>
        <begin position="126"/>
        <end position="184"/>
    </location>
</feature>
<feature type="compositionally biased region" description="Acidic residues" evidence="2">
    <location>
        <begin position="141"/>
        <end position="161"/>
    </location>
</feature>
<comment type="subunit">
    <text evidence="1">Part of the 50S ribosomal subunit. Contacts protein L32.</text>
</comment>
<comment type="similarity">
    <text evidence="1">Belongs to the bacterial ribosomal protein bL17 family.</text>
</comment>
<sequence length="184" mass="19818">MPTPKKGARLGGSASHQKKILSNLAASLFEHGAIKTTDAKAKTLRPYAEKLITKAKSGTVADRRNVLALIPNKDIVAYLFDELAPKFENRAGGYTRIIKLENRKGDNAPMSQISLVLEETVSAEATRAARAAASKQTADEAQVEETPAEEVTEETAAEETTEAAQADEAPAEEAPVEEKKDEEK</sequence>
<evidence type="ECO:0000255" key="1">
    <source>
        <dbReference type="HAMAP-Rule" id="MF_01368"/>
    </source>
</evidence>
<evidence type="ECO:0000256" key="2">
    <source>
        <dbReference type="SAM" id="MobiDB-lite"/>
    </source>
</evidence>
<evidence type="ECO:0000305" key="3"/>
<gene>
    <name evidence="1" type="primary">rplQ</name>
    <name type="ordered locus">CE0573</name>
</gene>